<accession>P12239</accession>
<accession>Q8GI49</accession>
<keyword id="KW-0002">3D-structure</keyword>
<keyword id="KW-0903">Direct protein sequencing</keyword>
<keyword id="KW-0249">Electron transport</keyword>
<keyword id="KW-0349">Heme</keyword>
<keyword id="KW-0408">Iron</keyword>
<keyword id="KW-0472">Membrane</keyword>
<keyword id="KW-0479">Metal-binding</keyword>
<keyword id="KW-0602">Photosynthesis</keyword>
<keyword id="KW-0604">Photosystem II</keyword>
<keyword id="KW-0793">Thylakoid</keyword>
<keyword id="KW-0812">Transmembrane</keyword>
<keyword id="KW-1133">Transmembrane helix</keyword>
<keyword id="KW-0813">Transport</keyword>
<reference key="1">
    <citation type="journal article" date="2002" name="Plant Cell Physiol.">
        <title>Low-molecular-mass polypeptide components of a photosystem II preparation from the thermophilic cyanobacterium Thermosynechococcus vulcanus.</title>
        <authorList>
            <person name="Kashino Y."/>
            <person name="Koike H."/>
            <person name="Yoshio M."/>
            <person name="Egashira H."/>
            <person name="Ikeuchi M."/>
            <person name="Pakrasi H.B."/>
            <person name="Satoh K."/>
        </authorList>
    </citation>
    <scope>NUCLEOTIDE SEQUENCE [GENOMIC DNA]</scope>
    <scope>PROTEIN SEQUENCE OF 2-8</scope>
    <scope>COMPOSITION OF PHOTOSYSTEM II</scope>
    <scope>SUBUNIT</scope>
</reference>
<reference key="2">
    <citation type="journal article" date="1989" name="FEBS Lett.">
        <title>Identification of psbI and psbL gene products in cyanobacterial photosystem II reaction center preparation.</title>
        <authorList>
            <person name="Ikeuchi M."/>
            <person name="Koike H."/>
            <person name="Inoue Y."/>
        </authorList>
    </citation>
    <scope>PROTEIN SEQUENCE OF 2-22</scope>
</reference>
<reference key="3">
    <citation type="journal article" date="2003" name="Proc. Natl. Acad. Sci. U.S.A.">
        <title>Crystal structure of oxygen-evolving photosystem II from Thermosynechococcus vulcanus at 3.7-A resolution.</title>
        <authorList>
            <person name="Kamiya N."/>
            <person name="Shen J.-R."/>
        </authorList>
    </citation>
    <scope>X-RAY CRYSTALLOGRAPHY (3.7 ANGSTROMS) OF 2-45 IN PHOTOSYSTEM II</scope>
    <scope>COFACTOR</scope>
    <scope>SUBUNIT</scope>
    <scope>SUBCELLULAR LOCATION</scope>
</reference>
<reference key="4">
    <citation type="journal article" date="2009" name="Proc. Natl. Acad. Sci. U.S.A.">
        <title>Location of chloride and its possible functions in oxygen-evolving photosystem II revealed by X-ray crystallography.</title>
        <authorList>
            <person name="Kawakami K."/>
            <person name="Umena Y."/>
            <person name="Kamiya N."/>
            <person name="Shen J.R."/>
        </authorList>
    </citation>
    <scope>X-RAY CRYSTALLOGRAPHY (3.7 ANGSTROMS) OF 2-45 IN PHOTOSYSTEM II</scope>
    <scope>FUNCTION</scope>
    <scope>COFACTOR</scope>
    <scope>SUBUNIT</scope>
    <scope>SUBCELLULAR LOCATION</scope>
</reference>
<reference key="5">
    <citation type="journal article" date="2011" name="Nature">
        <title>Crystal structure of oxygen-evolving photosystem II at a resolution of 1.9 A.</title>
        <authorList>
            <person name="Umena Y."/>
            <person name="Kawakami K."/>
            <person name="Shen J.R."/>
            <person name="Kamiya N."/>
        </authorList>
    </citation>
    <scope>X-RAY CRYSTALLOGRAPHY (1.9 ANGSTROMS) OF 2-45 IN COMPLEX WITH HEME IN PHOTOSYSTEM II</scope>
    <scope>COFACTOR</scope>
    <scope>SUBUNIT</scope>
    <scope>SUBCELLULAR LOCATION</scope>
    <scope>TOPOLOGY</scope>
</reference>
<reference key="6">
    <citation type="journal article" date="2013" name="Proc. Natl. Acad. Sci. U.S.A.">
        <title>Structure of Sr-substituted photosystem II at 2.1 A resolution and its implications in the mechanism of water oxidation.</title>
        <authorList>
            <person name="Koua F.H."/>
            <person name="Umena Y."/>
            <person name="Kawakami K."/>
            <person name="Shen J.R."/>
        </authorList>
    </citation>
    <scope>X-RAY CRYSTALLOGRAPHY (2.1 ANGSTROMS) OF 12-45 IN PHOTOSYSTEM II</scope>
    <scope>FUNCTION</scope>
    <scope>COFACTOR</scope>
    <scope>SUBUNIT</scope>
    <scope>SUBCELLULAR LOCATION</scope>
</reference>
<proteinExistence type="evidence at protein level"/>
<gene>
    <name evidence="1" type="primary">psbF</name>
</gene>
<dbReference type="EMBL" id="AB086860">
    <property type="protein sequence ID" value="BAC53635.1"/>
    <property type="molecule type" value="Genomic_DNA"/>
</dbReference>
<dbReference type="PIR" id="S05031">
    <property type="entry name" value="S05031"/>
</dbReference>
<dbReference type="PDB" id="1IZL">
    <property type="method" value="X-ray"/>
    <property type="resolution" value="3.70 A"/>
    <property type="chains" value="F/Q=2-45"/>
</dbReference>
<dbReference type="PDB" id="3A0B">
    <property type="method" value="X-ray"/>
    <property type="resolution" value="3.70 A"/>
    <property type="chains" value="F/f=2-45"/>
</dbReference>
<dbReference type="PDB" id="3A0H">
    <property type="method" value="X-ray"/>
    <property type="resolution" value="4.00 A"/>
    <property type="chains" value="F/f=2-45"/>
</dbReference>
<dbReference type="PDB" id="3WU2">
    <property type="method" value="X-ray"/>
    <property type="resolution" value="1.90 A"/>
    <property type="chains" value="F/f=2-45"/>
</dbReference>
<dbReference type="PDB" id="4IL6">
    <property type="method" value="X-ray"/>
    <property type="resolution" value="2.10 A"/>
    <property type="chains" value="F/f=12-45"/>
</dbReference>
<dbReference type="PDB" id="4UB6">
    <property type="method" value="X-ray"/>
    <property type="resolution" value="1.95 A"/>
    <property type="chains" value="F/f=2-45"/>
</dbReference>
<dbReference type="PDB" id="4UB8">
    <property type="method" value="X-ray"/>
    <property type="resolution" value="1.95 A"/>
    <property type="chains" value="F/f=2-45"/>
</dbReference>
<dbReference type="PDB" id="5B5E">
    <property type="method" value="X-ray"/>
    <property type="resolution" value="1.87 A"/>
    <property type="chains" value="F/f=2-45"/>
</dbReference>
<dbReference type="PDB" id="5B66">
    <property type="method" value="X-ray"/>
    <property type="resolution" value="1.85 A"/>
    <property type="chains" value="F/f=2-45"/>
</dbReference>
<dbReference type="PDB" id="5GTH">
    <property type="method" value="X-ray"/>
    <property type="resolution" value="2.50 A"/>
    <property type="chains" value="F/f=2-45"/>
</dbReference>
<dbReference type="PDB" id="5GTI">
    <property type="method" value="X-ray"/>
    <property type="resolution" value="2.50 A"/>
    <property type="chains" value="F/f=2-45"/>
</dbReference>
<dbReference type="PDB" id="5V2C">
    <property type="method" value="X-ray"/>
    <property type="resolution" value="1.90 A"/>
    <property type="chains" value="F/f=2-45"/>
</dbReference>
<dbReference type="PDB" id="5WS5">
    <property type="method" value="X-ray"/>
    <property type="resolution" value="2.35 A"/>
    <property type="chains" value="F/f=2-45"/>
</dbReference>
<dbReference type="PDB" id="5WS6">
    <property type="method" value="X-ray"/>
    <property type="resolution" value="2.35 A"/>
    <property type="chains" value="F/f=2-45"/>
</dbReference>
<dbReference type="PDB" id="6JLJ">
    <property type="method" value="X-ray"/>
    <property type="resolution" value="2.15 A"/>
    <property type="chains" value="F/f=2-45"/>
</dbReference>
<dbReference type="PDB" id="6JLK">
    <property type="method" value="X-ray"/>
    <property type="resolution" value="2.15 A"/>
    <property type="chains" value="F/f=2-45"/>
</dbReference>
<dbReference type="PDB" id="6JLL">
    <property type="method" value="X-ray"/>
    <property type="resolution" value="2.15 A"/>
    <property type="chains" value="F/f=2-45"/>
</dbReference>
<dbReference type="PDB" id="6JLM">
    <property type="method" value="X-ray"/>
    <property type="resolution" value="2.35 A"/>
    <property type="chains" value="F/f=2-45"/>
</dbReference>
<dbReference type="PDB" id="6JLN">
    <property type="method" value="X-ray"/>
    <property type="resolution" value="2.40 A"/>
    <property type="chains" value="F/f=2-45"/>
</dbReference>
<dbReference type="PDB" id="6JLO">
    <property type="method" value="X-ray"/>
    <property type="resolution" value="2.40 A"/>
    <property type="chains" value="F/f=2-45"/>
</dbReference>
<dbReference type="PDB" id="6JLP">
    <property type="method" value="X-ray"/>
    <property type="resolution" value="2.50 A"/>
    <property type="chains" value="F/f=2-45"/>
</dbReference>
<dbReference type="PDB" id="7CJI">
    <property type="method" value="X-ray"/>
    <property type="resolution" value="2.35 A"/>
    <property type="chains" value="F/f=2-45"/>
</dbReference>
<dbReference type="PDB" id="7CJJ">
    <property type="method" value="X-ray"/>
    <property type="resolution" value="2.40 A"/>
    <property type="chains" value="F/f=2-45"/>
</dbReference>
<dbReference type="PDB" id="7COU">
    <property type="method" value="X-ray"/>
    <property type="resolution" value="2.25 A"/>
    <property type="chains" value="F/f=2-45"/>
</dbReference>
<dbReference type="PDB" id="7CZL">
    <property type="method" value="EM"/>
    <property type="resolution" value="3.78 A"/>
    <property type="chains" value="F/f=14-44"/>
</dbReference>
<dbReference type="PDB" id="7D1T">
    <property type="method" value="EM"/>
    <property type="resolution" value="1.95 A"/>
    <property type="chains" value="F/f=12-45"/>
</dbReference>
<dbReference type="PDB" id="7D1U">
    <property type="method" value="EM"/>
    <property type="resolution" value="2.08 A"/>
    <property type="chains" value="F/f=12-45"/>
</dbReference>
<dbReference type="PDB" id="7DXA">
    <property type="method" value="EM"/>
    <property type="resolution" value="3.14 A"/>
    <property type="chains" value="f=1-45"/>
</dbReference>
<dbReference type="PDB" id="7DXH">
    <property type="method" value="EM"/>
    <property type="resolution" value="3.14 A"/>
    <property type="chains" value="f=1-45"/>
</dbReference>
<dbReference type="PDB" id="7EDA">
    <property type="method" value="EM"/>
    <property type="resolution" value="2.78 A"/>
    <property type="chains" value="F=1-45"/>
</dbReference>
<dbReference type="PDB" id="8GN0">
    <property type="method" value="X-ray"/>
    <property type="resolution" value="2.15 A"/>
    <property type="chains" value="F/f=2-45"/>
</dbReference>
<dbReference type="PDB" id="8GN1">
    <property type="method" value="X-ray"/>
    <property type="resolution" value="2.10 A"/>
    <property type="chains" value="F/f=2-45"/>
</dbReference>
<dbReference type="PDB" id="8GN2">
    <property type="method" value="X-ray"/>
    <property type="resolution" value="1.95 A"/>
    <property type="chains" value="F/f=2-45"/>
</dbReference>
<dbReference type="PDB" id="8IR5">
    <property type="method" value="X-ray"/>
    <property type="resolution" value="2.15 A"/>
    <property type="chains" value="F/f=2-45"/>
</dbReference>
<dbReference type="PDB" id="8IR6">
    <property type="method" value="X-ray"/>
    <property type="resolution" value="2.20 A"/>
    <property type="chains" value="F/f=2-45"/>
</dbReference>
<dbReference type="PDB" id="8IR7">
    <property type="method" value="X-ray"/>
    <property type="resolution" value="2.25 A"/>
    <property type="chains" value="F/f=2-45"/>
</dbReference>
<dbReference type="PDB" id="8IR8">
    <property type="method" value="X-ray"/>
    <property type="resolution" value="2.25 A"/>
    <property type="chains" value="F/f=2-45"/>
</dbReference>
<dbReference type="PDB" id="8IR9">
    <property type="method" value="X-ray"/>
    <property type="resolution" value="2.20 A"/>
    <property type="chains" value="F/f=2-45"/>
</dbReference>
<dbReference type="PDB" id="8IRA">
    <property type="method" value="X-ray"/>
    <property type="resolution" value="2.20 A"/>
    <property type="chains" value="F/f=2-45"/>
</dbReference>
<dbReference type="PDB" id="8IRB">
    <property type="method" value="X-ray"/>
    <property type="resolution" value="2.30 A"/>
    <property type="chains" value="F/f=2-45"/>
</dbReference>
<dbReference type="PDB" id="8IRC">
    <property type="method" value="X-ray"/>
    <property type="resolution" value="2.25 A"/>
    <property type="chains" value="F/f=2-45"/>
</dbReference>
<dbReference type="PDB" id="8IRD">
    <property type="method" value="X-ray"/>
    <property type="resolution" value="2.30 A"/>
    <property type="chains" value="F/f=2-45"/>
</dbReference>
<dbReference type="PDB" id="8IRE">
    <property type="method" value="X-ray"/>
    <property type="resolution" value="2.25 A"/>
    <property type="chains" value="F/f=2-45"/>
</dbReference>
<dbReference type="PDB" id="8IRF">
    <property type="method" value="X-ray"/>
    <property type="resolution" value="2.25 A"/>
    <property type="chains" value="F/f=2-45"/>
</dbReference>
<dbReference type="PDB" id="8IRG">
    <property type="method" value="X-ray"/>
    <property type="resolution" value="2.30 A"/>
    <property type="chains" value="F/f=2-45"/>
</dbReference>
<dbReference type="PDB" id="8IRH">
    <property type="method" value="X-ray"/>
    <property type="resolution" value="2.25 A"/>
    <property type="chains" value="F/f=2-45"/>
</dbReference>
<dbReference type="PDB" id="8IRI">
    <property type="method" value="X-ray"/>
    <property type="resolution" value="2.25 A"/>
    <property type="chains" value="F/f=2-45"/>
</dbReference>
<dbReference type="PDBsum" id="1IZL"/>
<dbReference type="PDBsum" id="3A0B"/>
<dbReference type="PDBsum" id="3A0H"/>
<dbReference type="PDBsum" id="3WU2"/>
<dbReference type="PDBsum" id="4IL6"/>
<dbReference type="PDBsum" id="4UB6"/>
<dbReference type="PDBsum" id="4UB8"/>
<dbReference type="PDBsum" id="5B5E"/>
<dbReference type="PDBsum" id="5B66"/>
<dbReference type="PDBsum" id="5GTH"/>
<dbReference type="PDBsum" id="5GTI"/>
<dbReference type="PDBsum" id="5V2C"/>
<dbReference type="PDBsum" id="5WS5"/>
<dbReference type="PDBsum" id="5WS6"/>
<dbReference type="PDBsum" id="6JLJ"/>
<dbReference type="PDBsum" id="6JLK"/>
<dbReference type="PDBsum" id="6JLL"/>
<dbReference type="PDBsum" id="6JLM"/>
<dbReference type="PDBsum" id="6JLN"/>
<dbReference type="PDBsum" id="6JLO"/>
<dbReference type="PDBsum" id="6JLP"/>
<dbReference type="PDBsum" id="7CJI"/>
<dbReference type="PDBsum" id="7CJJ"/>
<dbReference type="PDBsum" id="7COU"/>
<dbReference type="PDBsum" id="7CZL"/>
<dbReference type="PDBsum" id="7D1T"/>
<dbReference type="PDBsum" id="7D1U"/>
<dbReference type="PDBsum" id="7DXA"/>
<dbReference type="PDBsum" id="7DXH"/>
<dbReference type="PDBsum" id="7EDA"/>
<dbReference type="PDBsum" id="8GN0"/>
<dbReference type="PDBsum" id="8GN1"/>
<dbReference type="PDBsum" id="8GN2"/>
<dbReference type="PDBsum" id="8IR5"/>
<dbReference type="PDBsum" id="8IR6"/>
<dbReference type="PDBsum" id="8IR7"/>
<dbReference type="PDBsum" id="8IR8"/>
<dbReference type="PDBsum" id="8IR9"/>
<dbReference type="PDBsum" id="8IRA"/>
<dbReference type="PDBsum" id="8IRB"/>
<dbReference type="PDBsum" id="8IRC"/>
<dbReference type="PDBsum" id="8IRD"/>
<dbReference type="PDBsum" id="8IRE"/>
<dbReference type="PDBsum" id="8IRF"/>
<dbReference type="PDBsum" id="8IRG"/>
<dbReference type="PDBsum" id="8IRH"/>
<dbReference type="PDBsum" id="8IRI"/>
<dbReference type="EMDB" id="EMD-30511"/>
<dbReference type="EMDB" id="EMD-30547"/>
<dbReference type="EMDB" id="EMD-30548"/>
<dbReference type="EMDB" id="EMD-30902"/>
<dbReference type="EMDB" id="EMD-30909"/>
<dbReference type="EMDB" id="EMD-31062"/>
<dbReference type="SMR" id="P12239"/>
<dbReference type="DIP" id="DIP-48863N"/>
<dbReference type="IntAct" id="P12239">
    <property type="interactions" value="1"/>
</dbReference>
<dbReference type="EvolutionaryTrace" id="P12239"/>
<dbReference type="GO" id="GO:0009539">
    <property type="term" value="C:photosystem II reaction center"/>
    <property type="evidence" value="ECO:0007669"/>
    <property type="project" value="InterPro"/>
</dbReference>
<dbReference type="GO" id="GO:0031676">
    <property type="term" value="C:plasma membrane-derived thylakoid membrane"/>
    <property type="evidence" value="ECO:0007669"/>
    <property type="project" value="UniProtKB-SubCell"/>
</dbReference>
<dbReference type="GO" id="GO:0009055">
    <property type="term" value="F:electron transfer activity"/>
    <property type="evidence" value="ECO:0007669"/>
    <property type="project" value="UniProtKB-UniRule"/>
</dbReference>
<dbReference type="GO" id="GO:0020037">
    <property type="term" value="F:heme binding"/>
    <property type="evidence" value="ECO:0007669"/>
    <property type="project" value="InterPro"/>
</dbReference>
<dbReference type="GO" id="GO:0005506">
    <property type="term" value="F:iron ion binding"/>
    <property type="evidence" value="ECO:0007669"/>
    <property type="project" value="UniProtKB-UniRule"/>
</dbReference>
<dbReference type="GO" id="GO:0009767">
    <property type="term" value="P:photosynthetic electron transport chain"/>
    <property type="evidence" value="ECO:0007669"/>
    <property type="project" value="InterPro"/>
</dbReference>
<dbReference type="HAMAP" id="MF_00643">
    <property type="entry name" value="PSII_PsbF"/>
    <property type="match status" value="1"/>
</dbReference>
<dbReference type="InterPro" id="IPR006241">
    <property type="entry name" value="PSII_cyt_b559_bsu"/>
</dbReference>
<dbReference type="InterPro" id="IPR006216">
    <property type="entry name" value="PSII_cyt_b559_CS"/>
</dbReference>
<dbReference type="InterPro" id="IPR013081">
    <property type="entry name" value="PSII_cyt_b559_N"/>
</dbReference>
<dbReference type="NCBIfam" id="TIGR01333">
    <property type="entry name" value="cyt_b559_beta"/>
    <property type="match status" value="1"/>
</dbReference>
<dbReference type="Pfam" id="PF00283">
    <property type="entry name" value="Cytochrom_B559"/>
    <property type="match status" value="1"/>
</dbReference>
<dbReference type="PIRSF" id="PIRSF000037">
    <property type="entry name" value="PsbF"/>
    <property type="match status" value="1"/>
</dbReference>
<dbReference type="SUPFAM" id="SSF161045">
    <property type="entry name" value="Cytochrome b559 subunits"/>
    <property type="match status" value="1"/>
</dbReference>
<dbReference type="PROSITE" id="PS00537">
    <property type="entry name" value="CYTOCHROME_B559"/>
    <property type="match status" value="1"/>
</dbReference>
<organism>
    <name type="scientific">Thermostichus vulcanus</name>
    <name type="common">Synechococcus vulcanus</name>
    <dbReference type="NCBI Taxonomy" id="32053"/>
    <lineage>
        <taxon>Bacteria</taxon>
        <taxon>Bacillati</taxon>
        <taxon>Cyanobacteriota</taxon>
        <taxon>Cyanophyceae</taxon>
        <taxon>Thermostichales</taxon>
        <taxon>Thermostichaceae</taxon>
        <taxon>Thermostichus</taxon>
    </lineage>
</organism>
<protein>
    <recommendedName>
        <fullName evidence="1">Cytochrome b559 subunit beta</fullName>
    </recommendedName>
    <alternativeName>
        <fullName evidence="1">PSII reaction center subunit VI</fullName>
    </alternativeName>
</protein>
<comment type="function">
    <text evidence="1 4 6">This b-type cytochrome is tightly associated with the reaction center of photosystem II (PSII). PSII is a light-driven water:plastoquinone oxidoreductase that uses light energy to abstract electrons from H(2)O, generating O(2) and a proton gradient subsequently used for ATP formation. It consists of a core antenna complex that captures photons, and an electron transfer chain that converts photonic excitation into a charge separation.</text>
</comment>
<comment type="cofactor">
    <cofactor evidence="1">
        <name>heme b</name>
        <dbReference type="ChEBI" id="CHEBI:60344"/>
    </cofactor>
    <text evidence="1 3 4 5 6">With its partner (PsbE) binds heme. PSII binds additional chlorophylls, carotenoids and specific lipids.</text>
</comment>
<comment type="subunit">
    <text evidence="1 2 3 4 5 6">Heterodimer of an alpha subunit and a beta subunit. PSII is composed of 1 copy each of membrane proteins PsbA, PsbB, PsbC, PsbD, PsbE, PsbF, PsbH, PsbI, PsbJ, PsbK, PsbL, PsbM, PsbT, PsbX, PsbY, PsbZ, Psb30/Ycf12, peripheral proteins PsbO, CyanoQ (PsbQ), PsbU, PsbV and a large number of cofactors. It forms dimeric complexes.</text>
</comment>
<comment type="subcellular location">
    <subcellularLocation>
        <location evidence="1 3 4 5 6">Cellular thylakoid membrane</location>
        <topology evidence="1 3 4 5 6">Single-pass membrane protein</topology>
    </subcellularLocation>
</comment>
<comment type="similarity">
    <text evidence="1">Belongs to the PsbE/PsbF family.</text>
</comment>
<feature type="initiator methionine" description="Removed" evidence="2 7">
    <location>
        <position position="1"/>
    </location>
</feature>
<feature type="chain" id="PRO_0000200477" description="Cytochrome b559 subunit beta">
    <location>
        <begin position="2"/>
        <end position="45"/>
    </location>
</feature>
<feature type="topological domain" description="Cytoplasmic" evidence="5">
    <location>
        <begin position="2"/>
        <end position="19"/>
    </location>
</feature>
<feature type="transmembrane region" description="Helical" evidence="1 5">
    <location>
        <begin position="20"/>
        <end position="36"/>
    </location>
</feature>
<feature type="topological domain" description="Lumenal" evidence="5">
    <location>
        <begin position="37"/>
        <end position="45"/>
    </location>
</feature>
<feature type="binding site" description="axial binding residue" evidence="1 5 6 8">
    <location>
        <position position="24"/>
    </location>
    <ligand>
        <name>heme</name>
        <dbReference type="ChEBI" id="CHEBI:30413"/>
        <note>ligand shared with alpha subunit</note>
    </ligand>
    <ligandPart>
        <name>Fe</name>
        <dbReference type="ChEBI" id="CHEBI:18248"/>
    </ligandPart>
</feature>
<feature type="helix" evidence="9">
    <location>
        <begin position="18"/>
        <end position="40"/>
    </location>
</feature>
<sequence length="45" mass="5065">MTSNTPNQEPVSYPIFTVRWVAVHTLAVPTIFFLGAIAAMQFIQR</sequence>
<evidence type="ECO:0000255" key="1">
    <source>
        <dbReference type="HAMAP-Rule" id="MF_00643"/>
    </source>
</evidence>
<evidence type="ECO:0000269" key="2">
    <source>
    </source>
</evidence>
<evidence type="ECO:0000269" key="3">
    <source>
    </source>
</evidence>
<evidence type="ECO:0000269" key="4">
    <source>
    </source>
</evidence>
<evidence type="ECO:0000269" key="5">
    <source>
    </source>
</evidence>
<evidence type="ECO:0000269" key="6">
    <source>
    </source>
</evidence>
<evidence type="ECO:0000269" key="7">
    <source ref="2"/>
</evidence>
<evidence type="ECO:0000303" key="8">
    <source>
    </source>
</evidence>
<evidence type="ECO:0007829" key="9">
    <source>
        <dbReference type="PDB" id="5B66"/>
    </source>
</evidence>
<name>PSBF_THEVL</name>